<comment type="function">
    <text evidence="2">Responsible for synthesis of pseudouridine from uracil at positions 1911, 1915 and 1917 in 23S ribosomal RNA.</text>
</comment>
<comment type="catalytic activity">
    <reaction evidence="2">
        <text>uridine(1911/1915/1917) in 23S rRNA = pseudouridine(1911/1915/1917) in 23S rRNA</text>
        <dbReference type="Rhea" id="RHEA:42524"/>
        <dbReference type="Rhea" id="RHEA-COMP:10097"/>
        <dbReference type="Rhea" id="RHEA-COMP:10098"/>
        <dbReference type="ChEBI" id="CHEBI:65314"/>
        <dbReference type="ChEBI" id="CHEBI:65315"/>
        <dbReference type="EC" id="5.4.99.23"/>
    </reaction>
</comment>
<comment type="subcellular location">
    <subcellularLocation>
        <location evidence="2">Cytoplasm</location>
    </subcellularLocation>
    <text evidence="2">Associates with late stage pre-50S ribosomal subunits.</text>
</comment>
<comment type="similarity">
    <text evidence="4">Belongs to the pseudouridine synthase RluA family.</text>
</comment>
<organism>
    <name type="scientific">Buchnera aphidicola subsp. Baizongia pistaciae (strain Bp)</name>
    <dbReference type="NCBI Taxonomy" id="224915"/>
    <lineage>
        <taxon>Bacteria</taxon>
        <taxon>Pseudomonadati</taxon>
        <taxon>Pseudomonadota</taxon>
        <taxon>Gammaproteobacteria</taxon>
        <taxon>Enterobacterales</taxon>
        <taxon>Erwiniaceae</taxon>
        <taxon>Buchnera</taxon>
    </lineage>
</organism>
<accession>Q89AD9</accession>
<feature type="chain" id="PRO_0000162686" description="Ribosomal large subunit pseudouridine synthase D">
    <location>
        <begin position="1"/>
        <end position="317"/>
    </location>
</feature>
<feature type="domain" description="S4 RNA-binding" evidence="3">
    <location>
        <begin position="19"/>
        <end position="83"/>
    </location>
</feature>
<feature type="active site" evidence="1">
    <location>
        <position position="140"/>
    </location>
</feature>
<sequence>MQNKLKLIAIVPKISLLKNRLDQVLASLFKKHSRTILKRHILSKDVCVNGRILDQPDAKVLYKDIISINLKFKAKNDYQAENIFLNVIYEDDDILVINKQDNFVVHPGAGNTSGTLLNALLHRDSTFFNIPRAGIVHRLDKDTTGLMVIAKNNLSYMALIDQIKCKKVIREYQAIVYGKVISGGTIVKSIIRNPIKRTTMIVNKCGKRAITHYRILKRFTHHTHLKIILETGRTHQIRTHMLYINFPLVGDKTYGNKFKFYKNISLTLLEQVKKFPRQALHASRLCLYHPVTKHLMEWNSTLPRDMLNLIALLNKNI</sequence>
<reference key="1">
    <citation type="journal article" date="2003" name="Proc. Natl. Acad. Sci. U.S.A.">
        <title>Reductive genome evolution in Buchnera aphidicola.</title>
        <authorList>
            <person name="van Ham R.C.H.J."/>
            <person name="Kamerbeek J."/>
            <person name="Palacios C."/>
            <person name="Rausell C."/>
            <person name="Abascal F."/>
            <person name="Bastolla U."/>
            <person name="Fernandez J.M."/>
            <person name="Jimenez L."/>
            <person name="Postigo M."/>
            <person name="Silva F.J."/>
            <person name="Tamames J."/>
            <person name="Viguera E."/>
            <person name="Latorre A."/>
            <person name="Valencia A."/>
            <person name="Moran F."/>
            <person name="Moya A."/>
        </authorList>
    </citation>
    <scope>NUCLEOTIDE SEQUENCE [LARGE SCALE GENOMIC DNA]</scope>
    <source>
        <strain>Bp</strain>
    </source>
</reference>
<gene>
    <name type="primary">rluD</name>
    <name type="ordered locus">bbp_363</name>
</gene>
<keyword id="KW-0963">Cytoplasm</keyword>
<keyword id="KW-0413">Isomerase</keyword>
<keyword id="KW-1185">Reference proteome</keyword>
<keyword id="KW-0694">RNA-binding</keyword>
<keyword id="KW-0698">rRNA processing</keyword>
<evidence type="ECO:0000250" key="1"/>
<evidence type="ECO:0000250" key="2">
    <source>
        <dbReference type="UniProtKB" id="P33643"/>
    </source>
</evidence>
<evidence type="ECO:0000255" key="3">
    <source>
        <dbReference type="PROSITE-ProRule" id="PRU00182"/>
    </source>
</evidence>
<evidence type="ECO:0000305" key="4"/>
<proteinExistence type="inferred from homology"/>
<name>RLUD_BUCBP</name>
<protein>
    <recommendedName>
        <fullName evidence="2">Ribosomal large subunit pseudouridine synthase D</fullName>
        <ecNumber evidence="2">5.4.99.23</ecNumber>
    </recommendedName>
    <alternativeName>
        <fullName>23S rRNA pseudouridine(1911/1915/1917) synthase</fullName>
    </alternativeName>
    <alternativeName>
        <fullName>rRNA pseudouridylate synthase D</fullName>
    </alternativeName>
    <alternativeName>
        <fullName>rRNA-uridine isomerase D</fullName>
    </alternativeName>
</protein>
<dbReference type="EC" id="5.4.99.23" evidence="2"/>
<dbReference type="EMBL" id="AE016826">
    <property type="protein sequence ID" value="AAO27082.1"/>
    <property type="molecule type" value="Genomic_DNA"/>
</dbReference>
<dbReference type="RefSeq" id="WP_011091483.1">
    <property type="nucleotide sequence ID" value="NC_004545.1"/>
</dbReference>
<dbReference type="SMR" id="Q89AD9"/>
<dbReference type="STRING" id="224915.bbp_363"/>
<dbReference type="KEGG" id="bab:bbp_363"/>
<dbReference type="eggNOG" id="COG0564">
    <property type="taxonomic scope" value="Bacteria"/>
</dbReference>
<dbReference type="HOGENOM" id="CLU_016902_4_0_6"/>
<dbReference type="OrthoDB" id="9807829at2"/>
<dbReference type="Proteomes" id="UP000000601">
    <property type="component" value="Chromosome"/>
</dbReference>
<dbReference type="GO" id="GO:0005737">
    <property type="term" value="C:cytoplasm"/>
    <property type="evidence" value="ECO:0007669"/>
    <property type="project" value="UniProtKB-SubCell"/>
</dbReference>
<dbReference type="GO" id="GO:0160140">
    <property type="term" value="F:23S rRNA pseudouridine(1911/1915/1917) synthase activity"/>
    <property type="evidence" value="ECO:0007669"/>
    <property type="project" value="UniProtKB-EC"/>
</dbReference>
<dbReference type="GO" id="GO:0003723">
    <property type="term" value="F:RNA binding"/>
    <property type="evidence" value="ECO:0007669"/>
    <property type="project" value="UniProtKB-KW"/>
</dbReference>
<dbReference type="GO" id="GO:0000455">
    <property type="term" value="P:enzyme-directed rRNA pseudouridine synthesis"/>
    <property type="evidence" value="ECO:0007669"/>
    <property type="project" value="UniProtKB-ARBA"/>
</dbReference>
<dbReference type="CDD" id="cd02869">
    <property type="entry name" value="PseudoU_synth_RluA_like"/>
    <property type="match status" value="1"/>
</dbReference>
<dbReference type="CDD" id="cd00165">
    <property type="entry name" value="S4"/>
    <property type="match status" value="1"/>
</dbReference>
<dbReference type="Gene3D" id="3.30.2350.10">
    <property type="entry name" value="Pseudouridine synthase"/>
    <property type="match status" value="1"/>
</dbReference>
<dbReference type="Gene3D" id="3.10.290.10">
    <property type="entry name" value="RNA-binding S4 domain"/>
    <property type="match status" value="1"/>
</dbReference>
<dbReference type="InterPro" id="IPR020103">
    <property type="entry name" value="PsdUridine_synth_cat_dom_sf"/>
</dbReference>
<dbReference type="InterPro" id="IPR006224">
    <property type="entry name" value="PsdUridine_synth_RluA-like_CS"/>
</dbReference>
<dbReference type="InterPro" id="IPR006225">
    <property type="entry name" value="PsdUridine_synth_RluC/D"/>
</dbReference>
<dbReference type="InterPro" id="IPR006145">
    <property type="entry name" value="PsdUridine_synth_RsuA/RluA"/>
</dbReference>
<dbReference type="InterPro" id="IPR050188">
    <property type="entry name" value="RluA_PseudoU_synthase"/>
</dbReference>
<dbReference type="InterPro" id="IPR002942">
    <property type="entry name" value="S4_RNA-bd"/>
</dbReference>
<dbReference type="InterPro" id="IPR036986">
    <property type="entry name" value="S4_RNA-bd_sf"/>
</dbReference>
<dbReference type="NCBIfam" id="NF008385">
    <property type="entry name" value="PRK11180.1"/>
    <property type="match status" value="1"/>
</dbReference>
<dbReference type="NCBIfam" id="TIGR00005">
    <property type="entry name" value="rluA_subfam"/>
    <property type="match status" value="1"/>
</dbReference>
<dbReference type="PANTHER" id="PTHR21600">
    <property type="entry name" value="MITOCHONDRIAL RNA PSEUDOURIDINE SYNTHASE"/>
    <property type="match status" value="1"/>
</dbReference>
<dbReference type="PANTHER" id="PTHR21600:SF44">
    <property type="entry name" value="RIBOSOMAL LARGE SUBUNIT PSEUDOURIDINE SYNTHASE D"/>
    <property type="match status" value="1"/>
</dbReference>
<dbReference type="Pfam" id="PF00849">
    <property type="entry name" value="PseudoU_synth_2"/>
    <property type="match status" value="1"/>
</dbReference>
<dbReference type="SMART" id="SM00363">
    <property type="entry name" value="S4"/>
    <property type="match status" value="1"/>
</dbReference>
<dbReference type="SUPFAM" id="SSF55174">
    <property type="entry name" value="Alpha-L RNA-binding motif"/>
    <property type="match status" value="1"/>
</dbReference>
<dbReference type="SUPFAM" id="SSF55120">
    <property type="entry name" value="Pseudouridine synthase"/>
    <property type="match status" value="1"/>
</dbReference>
<dbReference type="PROSITE" id="PS01129">
    <property type="entry name" value="PSI_RLU"/>
    <property type="match status" value="1"/>
</dbReference>
<dbReference type="PROSITE" id="PS50889">
    <property type="entry name" value="S4"/>
    <property type="match status" value="1"/>
</dbReference>